<feature type="chain" id="PRO_0000146525" description="Small ribosomal subunit protein uS10">
    <location>
        <begin position="1"/>
        <end position="101"/>
    </location>
</feature>
<gene>
    <name evidence="1" type="primary">rpsJ</name>
    <name type="ordered locus">CE0521</name>
</gene>
<name>RS10_COREF</name>
<protein>
    <recommendedName>
        <fullName evidence="1">Small ribosomal subunit protein uS10</fullName>
    </recommendedName>
    <alternativeName>
        <fullName evidence="2">30S ribosomal protein S10</fullName>
    </alternativeName>
</protein>
<evidence type="ECO:0000255" key="1">
    <source>
        <dbReference type="HAMAP-Rule" id="MF_00508"/>
    </source>
</evidence>
<evidence type="ECO:0000305" key="2"/>
<comment type="function">
    <text evidence="1">Involved in the binding of tRNA to the ribosomes.</text>
</comment>
<comment type="subunit">
    <text evidence="1">Part of the 30S ribosomal subunit.</text>
</comment>
<comment type="similarity">
    <text evidence="1">Belongs to the universal ribosomal protein uS10 family.</text>
</comment>
<comment type="sequence caution" evidence="2">
    <conflict type="erroneous initiation">
        <sequence resource="EMBL-CDS" id="BAC17331"/>
    </conflict>
</comment>
<dbReference type="EMBL" id="BA000035">
    <property type="protein sequence ID" value="BAC17331.1"/>
    <property type="status" value="ALT_INIT"/>
    <property type="molecule type" value="Genomic_DNA"/>
</dbReference>
<dbReference type="RefSeq" id="WP_003854291.1">
    <property type="nucleotide sequence ID" value="NZ_GG700687.1"/>
</dbReference>
<dbReference type="SMR" id="P66327"/>
<dbReference type="STRING" id="196164.gene:10740923"/>
<dbReference type="GeneID" id="93973422"/>
<dbReference type="KEGG" id="cef:CE0521"/>
<dbReference type="eggNOG" id="COG0051">
    <property type="taxonomic scope" value="Bacteria"/>
</dbReference>
<dbReference type="HOGENOM" id="CLU_122625_1_2_11"/>
<dbReference type="OrthoDB" id="9804464at2"/>
<dbReference type="Proteomes" id="UP000001409">
    <property type="component" value="Chromosome"/>
</dbReference>
<dbReference type="GO" id="GO:1990904">
    <property type="term" value="C:ribonucleoprotein complex"/>
    <property type="evidence" value="ECO:0007669"/>
    <property type="project" value="UniProtKB-KW"/>
</dbReference>
<dbReference type="GO" id="GO:0005840">
    <property type="term" value="C:ribosome"/>
    <property type="evidence" value="ECO:0007669"/>
    <property type="project" value="UniProtKB-KW"/>
</dbReference>
<dbReference type="GO" id="GO:0003735">
    <property type="term" value="F:structural constituent of ribosome"/>
    <property type="evidence" value="ECO:0007669"/>
    <property type="project" value="InterPro"/>
</dbReference>
<dbReference type="GO" id="GO:0000049">
    <property type="term" value="F:tRNA binding"/>
    <property type="evidence" value="ECO:0007669"/>
    <property type="project" value="UniProtKB-UniRule"/>
</dbReference>
<dbReference type="GO" id="GO:0006412">
    <property type="term" value="P:translation"/>
    <property type="evidence" value="ECO:0007669"/>
    <property type="project" value="UniProtKB-UniRule"/>
</dbReference>
<dbReference type="FunFam" id="3.30.70.600:FF:000001">
    <property type="entry name" value="30S ribosomal protein S10"/>
    <property type="match status" value="1"/>
</dbReference>
<dbReference type="Gene3D" id="3.30.70.600">
    <property type="entry name" value="Ribosomal protein S10 domain"/>
    <property type="match status" value="1"/>
</dbReference>
<dbReference type="HAMAP" id="MF_00508">
    <property type="entry name" value="Ribosomal_uS10"/>
    <property type="match status" value="1"/>
</dbReference>
<dbReference type="InterPro" id="IPR001848">
    <property type="entry name" value="Ribosomal_uS10"/>
</dbReference>
<dbReference type="InterPro" id="IPR018268">
    <property type="entry name" value="Ribosomal_uS10_CS"/>
</dbReference>
<dbReference type="InterPro" id="IPR027486">
    <property type="entry name" value="Ribosomal_uS10_dom"/>
</dbReference>
<dbReference type="InterPro" id="IPR036838">
    <property type="entry name" value="Ribosomal_uS10_dom_sf"/>
</dbReference>
<dbReference type="NCBIfam" id="NF001861">
    <property type="entry name" value="PRK00596.1"/>
    <property type="match status" value="1"/>
</dbReference>
<dbReference type="NCBIfam" id="TIGR01049">
    <property type="entry name" value="rpsJ_bact"/>
    <property type="match status" value="1"/>
</dbReference>
<dbReference type="PANTHER" id="PTHR11700">
    <property type="entry name" value="30S RIBOSOMAL PROTEIN S10 FAMILY MEMBER"/>
    <property type="match status" value="1"/>
</dbReference>
<dbReference type="Pfam" id="PF00338">
    <property type="entry name" value="Ribosomal_S10"/>
    <property type="match status" value="1"/>
</dbReference>
<dbReference type="PRINTS" id="PR00971">
    <property type="entry name" value="RIBOSOMALS10"/>
</dbReference>
<dbReference type="SMART" id="SM01403">
    <property type="entry name" value="Ribosomal_S10"/>
    <property type="match status" value="1"/>
</dbReference>
<dbReference type="SUPFAM" id="SSF54999">
    <property type="entry name" value="Ribosomal protein S10"/>
    <property type="match status" value="1"/>
</dbReference>
<dbReference type="PROSITE" id="PS00361">
    <property type="entry name" value="RIBOSOMAL_S10"/>
    <property type="match status" value="1"/>
</dbReference>
<keyword id="KW-1185">Reference proteome</keyword>
<keyword id="KW-0687">Ribonucleoprotein</keyword>
<keyword id="KW-0689">Ribosomal protein</keyword>
<accession>P66327</accession>
<accession>Q8NT11</accession>
<sequence>MAGQKIRIRLKAYDHEAIDASARKIVETVTRTGARVVGPVPLPTEKNVYAVIRSPHKYKDSREHFEMRTHKRLIDILDPTPKTVDALMRIDLPASVDVNIQ</sequence>
<organism>
    <name type="scientific">Corynebacterium efficiens (strain DSM 44549 / YS-314 / AJ 12310 / JCM 11189 / NBRC 100395)</name>
    <dbReference type="NCBI Taxonomy" id="196164"/>
    <lineage>
        <taxon>Bacteria</taxon>
        <taxon>Bacillati</taxon>
        <taxon>Actinomycetota</taxon>
        <taxon>Actinomycetes</taxon>
        <taxon>Mycobacteriales</taxon>
        <taxon>Corynebacteriaceae</taxon>
        <taxon>Corynebacterium</taxon>
    </lineage>
</organism>
<proteinExistence type="inferred from homology"/>
<reference key="1">
    <citation type="journal article" date="2003" name="Genome Res.">
        <title>Comparative complete genome sequence analysis of the amino acid replacements responsible for the thermostability of Corynebacterium efficiens.</title>
        <authorList>
            <person name="Nishio Y."/>
            <person name="Nakamura Y."/>
            <person name="Kawarabayasi Y."/>
            <person name="Usuda Y."/>
            <person name="Kimura E."/>
            <person name="Sugimoto S."/>
            <person name="Matsui K."/>
            <person name="Yamagishi A."/>
            <person name="Kikuchi H."/>
            <person name="Ikeo K."/>
            <person name="Gojobori T."/>
        </authorList>
    </citation>
    <scope>NUCLEOTIDE SEQUENCE [LARGE SCALE GENOMIC DNA]</scope>
    <source>
        <strain>DSM 44549 / YS-314 / AJ 12310 / JCM 11189 / NBRC 100395</strain>
    </source>
</reference>